<comment type="function">
    <text evidence="1">Converts guanine to guanosine monophosphate, and hypoxanthine to inosine monophosphate. Transfers the 5-phosphoribosyl group from 5-phosphoribosylpyrophosphate onto the purine. Plays a central role in the generation of purine nucleotides through the purine salvage pathway (By similarity).</text>
</comment>
<comment type="catalytic activity">
    <reaction evidence="2">
        <text>IMP + diphosphate = hypoxanthine + 5-phospho-alpha-D-ribose 1-diphosphate</text>
        <dbReference type="Rhea" id="RHEA:17973"/>
        <dbReference type="ChEBI" id="CHEBI:17368"/>
        <dbReference type="ChEBI" id="CHEBI:33019"/>
        <dbReference type="ChEBI" id="CHEBI:58017"/>
        <dbReference type="ChEBI" id="CHEBI:58053"/>
        <dbReference type="EC" id="2.4.2.8"/>
    </reaction>
    <physiologicalReaction direction="right-to-left" evidence="2">
        <dbReference type="Rhea" id="RHEA:17975"/>
    </physiologicalReaction>
</comment>
<comment type="catalytic activity">
    <reaction evidence="2">
        <text>GMP + diphosphate = guanine + 5-phospho-alpha-D-ribose 1-diphosphate</text>
        <dbReference type="Rhea" id="RHEA:25424"/>
        <dbReference type="ChEBI" id="CHEBI:16235"/>
        <dbReference type="ChEBI" id="CHEBI:33019"/>
        <dbReference type="ChEBI" id="CHEBI:58017"/>
        <dbReference type="ChEBI" id="CHEBI:58115"/>
        <dbReference type="EC" id="2.4.2.8"/>
    </reaction>
    <physiologicalReaction direction="right-to-left" evidence="2">
        <dbReference type="Rhea" id="RHEA:25426"/>
    </physiologicalReaction>
</comment>
<comment type="cofactor">
    <cofactor evidence="1">
        <name>Mg(2+)</name>
        <dbReference type="ChEBI" id="CHEBI:18420"/>
    </cofactor>
    <text evidence="1">Binds 2 magnesium ions per subunit. The magnesium ions are essentially bound to the substrate and have few direct interactions with the protein.</text>
</comment>
<comment type="pathway">
    <text>Purine metabolism; IMP biosynthesis via salvage pathway; IMP from hypoxanthine: step 1/1.</text>
</comment>
<comment type="subunit">
    <text evidence="1">Homotetramer.</text>
</comment>
<comment type="subcellular location">
    <subcellularLocation>
        <location evidence="1">Cytoplasm</location>
    </subcellularLocation>
</comment>
<comment type="similarity">
    <text evidence="5">Belongs to the purine/pyrimidine phosphoribosyltransferase family.</text>
</comment>
<feature type="initiator methionine" description="Removed" evidence="2">
    <location>
        <position position="1"/>
    </location>
</feature>
<feature type="chain" id="PRO_0000139583" description="Hypoxanthine-guanine phosphoribosyltransferase">
    <location>
        <begin position="2"/>
        <end position="218"/>
    </location>
</feature>
<feature type="active site" description="Proton acceptor" evidence="1">
    <location>
        <position position="138"/>
    </location>
</feature>
<feature type="binding site" evidence="1">
    <location>
        <position position="69"/>
    </location>
    <ligand>
        <name>GMP</name>
        <dbReference type="ChEBI" id="CHEBI:58115"/>
    </ligand>
</feature>
<feature type="binding site" evidence="1">
    <location>
        <begin position="134"/>
        <end position="142"/>
    </location>
    <ligand>
        <name>GMP</name>
        <dbReference type="ChEBI" id="CHEBI:58115"/>
    </ligand>
</feature>
<feature type="binding site" evidence="1">
    <location>
        <position position="166"/>
    </location>
    <ligand>
        <name>GMP</name>
        <dbReference type="ChEBI" id="CHEBI:58115"/>
    </ligand>
</feature>
<feature type="binding site" evidence="1">
    <location>
        <begin position="186"/>
        <end position="188"/>
    </location>
    <ligand>
        <name>GMP</name>
        <dbReference type="ChEBI" id="CHEBI:58115"/>
    </ligand>
</feature>
<feature type="binding site" evidence="1">
    <location>
        <position position="194"/>
    </location>
    <ligand>
        <name>GMP</name>
        <dbReference type="ChEBI" id="CHEBI:58115"/>
    </ligand>
</feature>
<feature type="binding site" evidence="1">
    <location>
        <position position="194"/>
    </location>
    <ligand>
        <name>Mg(2+)</name>
        <dbReference type="ChEBI" id="CHEBI:18420"/>
    </ligand>
</feature>
<feature type="modified residue" description="N-acetylalanine" evidence="2">
    <location>
        <position position="2"/>
    </location>
</feature>
<feature type="modified residue" description="N6-acetyllysine" evidence="3">
    <location>
        <position position="103"/>
    </location>
</feature>
<feature type="modified residue" description="Phosphothreonine" evidence="4">
    <location>
        <position position="142"/>
    </location>
</feature>
<feature type="cross-link" description="Glycyl lysine isopeptide (Lys-Gly) (interchain with G-Cter in SUMO1); alternate" evidence="2">
    <location>
        <position position="115"/>
    </location>
</feature>
<feature type="cross-link" description="Glycyl lysine isopeptide (Lys-Gly) (interchain with G-Cter in SUMO2); alternate" evidence="2">
    <location>
        <position position="115"/>
    </location>
</feature>
<name>HPRT_CANLF</name>
<proteinExistence type="evidence at transcript level"/>
<reference key="1">
    <citation type="journal article" date="2004" name="Vet. Immunol. Immunopathol.">
        <title>Selection of HPRT primers as controls for determination of mRNA expression in dogs by RT-PCR.</title>
        <authorList>
            <person name="Johnson C.M."/>
            <person name="Yang S."/>
            <person name="Sellins K.S."/>
            <person name="Frank G.R."/>
        </authorList>
    </citation>
    <scope>NUCLEOTIDE SEQUENCE [MRNA]</scope>
</reference>
<gene>
    <name type="primary">HPRT1</name>
    <name type="synonym">HPRT</name>
</gene>
<protein>
    <recommendedName>
        <fullName>Hypoxanthine-guanine phosphoribosyltransferase</fullName>
        <shortName>HGPRT</shortName>
        <shortName>HGPRTase</shortName>
        <ecNumber evidence="2">2.4.2.8</ecNumber>
    </recommendedName>
</protein>
<dbReference type="EC" id="2.4.2.8" evidence="2"/>
<dbReference type="EMBL" id="AY283372">
    <property type="protein sequence ID" value="AAQ21102.1"/>
    <property type="molecule type" value="mRNA"/>
</dbReference>
<dbReference type="SMR" id="Q6WIT9"/>
<dbReference type="FunCoup" id="Q6WIT9">
    <property type="interactions" value="97"/>
</dbReference>
<dbReference type="STRING" id="9615.ENSCAFP00000037274"/>
<dbReference type="PaxDb" id="9612-ENSCAFP00000027831"/>
<dbReference type="eggNOG" id="KOG3367">
    <property type="taxonomic scope" value="Eukaryota"/>
</dbReference>
<dbReference type="InParanoid" id="Q6WIT9"/>
<dbReference type="OrthoDB" id="9449045at2759"/>
<dbReference type="UniPathway" id="UPA00591">
    <property type="reaction ID" value="UER00648"/>
</dbReference>
<dbReference type="Proteomes" id="UP000002254">
    <property type="component" value="Unplaced"/>
</dbReference>
<dbReference type="Proteomes" id="UP000694429">
    <property type="component" value="Unplaced"/>
</dbReference>
<dbReference type="Proteomes" id="UP000694542">
    <property type="component" value="Unplaced"/>
</dbReference>
<dbReference type="Proteomes" id="UP000805418">
    <property type="component" value="Unplaced"/>
</dbReference>
<dbReference type="GO" id="GO:0005737">
    <property type="term" value="C:cytoplasm"/>
    <property type="evidence" value="ECO:0000250"/>
    <property type="project" value="UniProtKB"/>
</dbReference>
<dbReference type="GO" id="GO:0005829">
    <property type="term" value="C:cytosol"/>
    <property type="evidence" value="ECO:0000318"/>
    <property type="project" value="GO_Central"/>
</dbReference>
<dbReference type="GO" id="GO:0052657">
    <property type="term" value="F:guanine phosphoribosyltransferase activity"/>
    <property type="evidence" value="ECO:0000250"/>
    <property type="project" value="UniProtKB"/>
</dbReference>
<dbReference type="GO" id="GO:0004422">
    <property type="term" value="F:hypoxanthine phosphoribosyltransferase activity"/>
    <property type="evidence" value="ECO:0000250"/>
    <property type="project" value="UniProtKB"/>
</dbReference>
<dbReference type="GO" id="GO:0042802">
    <property type="term" value="F:identical protein binding"/>
    <property type="evidence" value="ECO:0000250"/>
    <property type="project" value="UniProtKB"/>
</dbReference>
<dbReference type="GO" id="GO:0000287">
    <property type="term" value="F:magnesium ion binding"/>
    <property type="evidence" value="ECO:0000250"/>
    <property type="project" value="UniProtKB"/>
</dbReference>
<dbReference type="GO" id="GO:0000166">
    <property type="term" value="F:nucleotide binding"/>
    <property type="evidence" value="ECO:0007669"/>
    <property type="project" value="UniProtKB-KW"/>
</dbReference>
<dbReference type="GO" id="GO:0046038">
    <property type="term" value="P:GMP catabolic process"/>
    <property type="evidence" value="ECO:0000250"/>
    <property type="project" value="UniProtKB"/>
</dbReference>
<dbReference type="GO" id="GO:0032263">
    <property type="term" value="P:GMP salvage"/>
    <property type="evidence" value="ECO:0000318"/>
    <property type="project" value="GO_Central"/>
</dbReference>
<dbReference type="GO" id="GO:0006178">
    <property type="term" value="P:guanine salvage"/>
    <property type="evidence" value="ECO:0000250"/>
    <property type="project" value="UniProtKB"/>
</dbReference>
<dbReference type="GO" id="GO:0046100">
    <property type="term" value="P:hypoxanthine metabolic process"/>
    <property type="evidence" value="ECO:0000250"/>
    <property type="project" value="UniProtKB"/>
</dbReference>
<dbReference type="GO" id="GO:0043103">
    <property type="term" value="P:hypoxanthine salvage"/>
    <property type="evidence" value="ECO:0000250"/>
    <property type="project" value="UniProtKB"/>
</dbReference>
<dbReference type="GO" id="GO:0046040">
    <property type="term" value="P:IMP metabolic process"/>
    <property type="evidence" value="ECO:0000250"/>
    <property type="project" value="UniProtKB"/>
</dbReference>
<dbReference type="GO" id="GO:0032264">
    <property type="term" value="P:IMP salvage"/>
    <property type="evidence" value="ECO:0000318"/>
    <property type="project" value="GO_Central"/>
</dbReference>
<dbReference type="GO" id="GO:0045964">
    <property type="term" value="P:positive regulation of dopamine metabolic process"/>
    <property type="evidence" value="ECO:0000250"/>
    <property type="project" value="UniProtKB"/>
</dbReference>
<dbReference type="GO" id="GO:0006164">
    <property type="term" value="P:purine nucleotide biosynthetic process"/>
    <property type="evidence" value="ECO:0000250"/>
    <property type="project" value="UniProtKB"/>
</dbReference>
<dbReference type="GO" id="GO:0006166">
    <property type="term" value="P:purine ribonucleoside salvage"/>
    <property type="evidence" value="ECO:0000250"/>
    <property type="project" value="UniProtKB"/>
</dbReference>
<dbReference type="CDD" id="cd06223">
    <property type="entry name" value="PRTases_typeI"/>
    <property type="match status" value="1"/>
</dbReference>
<dbReference type="FunFam" id="3.40.50.2020:FF:000019">
    <property type="entry name" value="Hypoxanthine phosphoribosyltransferase"/>
    <property type="match status" value="1"/>
</dbReference>
<dbReference type="Gene3D" id="3.40.50.2020">
    <property type="match status" value="1"/>
</dbReference>
<dbReference type="InterPro" id="IPR050408">
    <property type="entry name" value="HGPRT"/>
</dbReference>
<dbReference type="InterPro" id="IPR005904">
    <property type="entry name" value="Hxn_phspho_trans"/>
</dbReference>
<dbReference type="InterPro" id="IPR000836">
    <property type="entry name" value="PRibTrfase_dom"/>
</dbReference>
<dbReference type="InterPro" id="IPR029057">
    <property type="entry name" value="PRTase-like"/>
</dbReference>
<dbReference type="NCBIfam" id="TIGR01203">
    <property type="entry name" value="HGPRTase"/>
    <property type="match status" value="1"/>
</dbReference>
<dbReference type="PANTHER" id="PTHR43340">
    <property type="entry name" value="HYPOXANTHINE-GUANINE PHOSPHORIBOSYLTRANSFERASE"/>
    <property type="match status" value="1"/>
</dbReference>
<dbReference type="PANTHER" id="PTHR43340:SF11">
    <property type="entry name" value="HYPOXANTHINE-GUANINE PHOSPHORIBOSYLTRANSFERASE"/>
    <property type="match status" value="1"/>
</dbReference>
<dbReference type="Pfam" id="PF00156">
    <property type="entry name" value="Pribosyltran"/>
    <property type="match status" value="1"/>
</dbReference>
<dbReference type="SUPFAM" id="SSF53271">
    <property type="entry name" value="PRTase-like"/>
    <property type="match status" value="1"/>
</dbReference>
<dbReference type="PROSITE" id="PS00103">
    <property type="entry name" value="PUR_PYR_PR_TRANSFER"/>
    <property type="match status" value="1"/>
</dbReference>
<sequence length="218" mass="24438">MATRSLGVVISDDEPGYDLDLFCIPHHYAEDLEKVFIPHGLIMDRTERLARDVMKEMGGHHIVALCVLKGGYKFFADLLDYIKALNRNSDGSIPMTVDFIRLKSYCNDQSTGDIKVIGGDDLSTLTGKNVLIVEDIIDTGKTMQTLLSLVKEHNPKMVKVASLLVKRTPRSVGYKPDFVGFEIPDKFVVGYALDYNEYFRDLNHVCVISETGKAKYKA</sequence>
<accession>Q6WIT9</accession>
<organism>
    <name type="scientific">Canis lupus familiaris</name>
    <name type="common">Dog</name>
    <name type="synonym">Canis familiaris</name>
    <dbReference type="NCBI Taxonomy" id="9615"/>
    <lineage>
        <taxon>Eukaryota</taxon>
        <taxon>Metazoa</taxon>
        <taxon>Chordata</taxon>
        <taxon>Craniata</taxon>
        <taxon>Vertebrata</taxon>
        <taxon>Euteleostomi</taxon>
        <taxon>Mammalia</taxon>
        <taxon>Eutheria</taxon>
        <taxon>Laurasiatheria</taxon>
        <taxon>Carnivora</taxon>
        <taxon>Caniformia</taxon>
        <taxon>Canidae</taxon>
        <taxon>Canis</taxon>
    </lineage>
</organism>
<keyword id="KW-0007">Acetylation</keyword>
<keyword id="KW-0963">Cytoplasm</keyword>
<keyword id="KW-0328">Glycosyltransferase</keyword>
<keyword id="KW-1017">Isopeptide bond</keyword>
<keyword id="KW-0460">Magnesium</keyword>
<keyword id="KW-0479">Metal-binding</keyword>
<keyword id="KW-0547">Nucleotide-binding</keyword>
<keyword id="KW-0597">Phosphoprotein</keyword>
<keyword id="KW-0660">Purine salvage</keyword>
<keyword id="KW-1185">Reference proteome</keyword>
<keyword id="KW-0808">Transferase</keyword>
<keyword id="KW-0832">Ubl conjugation</keyword>
<evidence type="ECO:0000250" key="1"/>
<evidence type="ECO:0000250" key="2">
    <source>
        <dbReference type="UniProtKB" id="P00492"/>
    </source>
</evidence>
<evidence type="ECO:0000250" key="3">
    <source>
        <dbReference type="UniProtKB" id="P00493"/>
    </source>
</evidence>
<evidence type="ECO:0000250" key="4">
    <source>
        <dbReference type="UniProtKB" id="P27605"/>
    </source>
</evidence>
<evidence type="ECO:0000305" key="5"/>